<protein>
    <recommendedName>
        <fullName>Activin receptor type-1</fullName>
        <ecNumber>2.7.11.30</ecNumber>
    </recommendedName>
    <alternativeName>
        <fullName>Activin receptor type I</fullName>
        <shortName>ACTR-I</shortName>
    </alternativeName>
    <alternativeName>
        <fullName>Serine/threonine-protein kinase receptor R1</fullName>
        <shortName>SKR1</shortName>
    </alternativeName>
    <alternativeName>
        <fullName>TGF-B superfamily receptor type I</fullName>
        <shortName>TSR-I</shortName>
    </alternativeName>
</protein>
<name>ACVR1_RAT</name>
<feature type="signal peptide" evidence="5">
    <location>
        <begin position="1"/>
        <end position="20"/>
    </location>
</feature>
<feature type="chain" id="PRO_0000024396" description="Activin receptor type-1">
    <location>
        <begin position="21"/>
        <end position="509"/>
    </location>
</feature>
<feature type="topological domain" description="Extracellular" evidence="5">
    <location>
        <begin position="21"/>
        <end position="123"/>
    </location>
</feature>
<feature type="transmembrane region" description="Helical" evidence="5">
    <location>
        <begin position="124"/>
        <end position="146"/>
    </location>
</feature>
<feature type="topological domain" description="Cytoplasmic" evidence="5">
    <location>
        <begin position="147"/>
        <end position="509"/>
    </location>
</feature>
<feature type="domain" description="GS" evidence="7">
    <location>
        <begin position="178"/>
        <end position="207"/>
    </location>
</feature>
<feature type="domain" description="Protein kinase" evidence="6">
    <location>
        <begin position="208"/>
        <end position="502"/>
    </location>
</feature>
<feature type="active site" description="Proton acceptor" evidence="6 8">
    <location>
        <position position="336"/>
    </location>
</feature>
<feature type="binding site" evidence="6">
    <location>
        <begin position="214"/>
        <end position="222"/>
    </location>
    <ligand>
        <name>ATP</name>
        <dbReference type="ChEBI" id="CHEBI:30616"/>
    </ligand>
</feature>
<feature type="binding site" evidence="6">
    <location>
        <position position="235"/>
    </location>
    <ligand>
        <name>ATP</name>
        <dbReference type="ChEBI" id="CHEBI:30616"/>
    </ligand>
</feature>
<feature type="modified residue" description="Phosphoserine" evidence="4">
    <location>
        <position position="501"/>
    </location>
</feature>
<feature type="glycosylation site" description="N-linked (GlcNAc...) asparagine" evidence="5">
    <location>
        <position position="102"/>
    </location>
</feature>
<keyword id="KW-0067">ATP-binding</keyword>
<keyword id="KW-0325">Glycoprotein</keyword>
<keyword id="KW-0418">Kinase</keyword>
<keyword id="KW-0460">Magnesium</keyword>
<keyword id="KW-0464">Manganese</keyword>
<keyword id="KW-0472">Membrane</keyword>
<keyword id="KW-0479">Metal-binding</keyword>
<keyword id="KW-0547">Nucleotide-binding</keyword>
<keyword id="KW-0597">Phosphoprotein</keyword>
<keyword id="KW-0675">Receptor</keyword>
<keyword id="KW-1185">Reference proteome</keyword>
<keyword id="KW-0723">Serine/threonine-protein kinase</keyword>
<keyword id="KW-0732">Signal</keyword>
<keyword id="KW-0808">Transferase</keyword>
<keyword id="KW-0812">Transmembrane</keyword>
<keyword id="KW-1133">Transmembrane helix</keyword>
<accession>P80201</accession>
<dbReference type="EC" id="2.7.11.30"/>
<dbReference type="EMBL" id="L19341">
    <property type="protein sequence ID" value="AAA40673.1"/>
    <property type="molecule type" value="mRNA"/>
</dbReference>
<dbReference type="PIR" id="A49664">
    <property type="entry name" value="A49664"/>
</dbReference>
<dbReference type="RefSeq" id="NP_001418374.1">
    <property type="nucleotide sequence ID" value="NM_001431445.1"/>
</dbReference>
<dbReference type="RefSeq" id="NP_077812.1">
    <property type="nucleotide sequence ID" value="NM_024486.2"/>
</dbReference>
<dbReference type="RefSeq" id="XP_006234276.1">
    <property type="nucleotide sequence ID" value="XM_006234214.3"/>
</dbReference>
<dbReference type="SMR" id="P80201"/>
<dbReference type="BioGRID" id="249474">
    <property type="interactions" value="1"/>
</dbReference>
<dbReference type="FunCoup" id="P80201">
    <property type="interactions" value="2981"/>
</dbReference>
<dbReference type="STRING" id="10116.ENSRNOP00000072326"/>
<dbReference type="GlyCosmos" id="P80201">
    <property type="glycosylation" value="1 site, No reported glycans"/>
</dbReference>
<dbReference type="GlyGen" id="P80201">
    <property type="glycosylation" value="1 site"/>
</dbReference>
<dbReference type="PhosphoSitePlus" id="P80201"/>
<dbReference type="SwissPalm" id="P80201"/>
<dbReference type="PaxDb" id="10116-ENSRNOP00000006963"/>
<dbReference type="GeneID" id="79558"/>
<dbReference type="KEGG" id="rno:79558"/>
<dbReference type="UCSC" id="RGD:620200">
    <property type="organism name" value="rat"/>
</dbReference>
<dbReference type="AGR" id="RGD:620200"/>
<dbReference type="CTD" id="90"/>
<dbReference type="RGD" id="620200">
    <property type="gene designation" value="Acvr1"/>
</dbReference>
<dbReference type="VEuPathDB" id="HostDB:ENSRNOG00000005033"/>
<dbReference type="eggNOG" id="KOG2052">
    <property type="taxonomic scope" value="Eukaryota"/>
</dbReference>
<dbReference type="HOGENOM" id="CLU_000288_8_5_1"/>
<dbReference type="InParanoid" id="P80201"/>
<dbReference type="PhylomeDB" id="P80201"/>
<dbReference type="TreeFam" id="TF314724"/>
<dbReference type="BRENDA" id="2.7.10.2">
    <property type="organism ID" value="5301"/>
</dbReference>
<dbReference type="PRO" id="PR:P80201"/>
<dbReference type="Proteomes" id="UP000002494">
    <property type="component" value="Chromosome 3"/>
</dbReference>
<dbReference type="Bgee" id="ENSRNOG00000005033">
    <property type="expression patterns" value="Expressed in quadriceps femoris and 19 other cell types or tissues"/>
</dbReference>
<dbReference type="ExpressionAtlas" id="P80201">
    <property type="expression patterns" value="baseline and differential"/>
</dbReference>
<dbReference type="GO" id="GO:0048179">
    <property type="term" value="C:activin receptor complex"/>
    <property type="evidence" value="ECO:0000314"/>
    <property type="project" value="RGD"/>
</dbReference>
<dbReference type="GO" id="GO:0045177">
    <property type="term" value="C:apical part of cell"/>
    <property type="evidence" value="ECO:0000266"/>
    <property type="project" value="RGD"/>
</dbReference>
<dbReference type="GO" id="GO:0070724">
    <property type="term" value="C:BMP receptor complex"/>
    <property type="evidence" value="ECO:0000318"/>
    <property type="project" value="GO_Central"/>
</dbReference>
<dbReference type="GO" id="GO:0005886">
    <property type="term" value="C:plasma membrane"/>
    <property type="evidence" value="ECO:0000266"/>
    <property type="project" value="RGD"/>
</dbReference>
<dbReference type="GO" id="GO:0048185">
    <property type="term" value="F:activin binding"/>
    <property type="evidence" value="ECO:0000266"/>
    <property type="project" value="RGD"/>
</dbReference>
<dbReference type="GO" id="GO:0016361">
    <property type="term" value="F:activin receptor activity, type I"/>
    <property type="evidence" value="ECO:0000314"/>
    <property type="project" value="RGD"/>
</dbReference>
<dbReference type="GO" id="GO:0005524">
    <property type="term" value="F:ATP binding"/>
    <property type="evidence" value="ECO:0000266"/>
    <property type="project" value="RGD"/>
</dbReference>
<dbReference type="GO" id="GO:0098821">
    <property type="term" value="F:BMP receptor activity"/>
    <property type="evidence" value="ECO:0000266"/>
    <property type="project" value="RGD"/>
</dbReference>
<dbReference type="GO" id="GO:0045296">
    <property type="term" value="F:cadherin binding"/>
    <property type="evidence" value="ECO:0000266"/>
    <property type="project" value="RGD"/>
</dbReference>
<dbReference type="GO" id="GO:0019838">
    <property type="term" value="F:growth factor binding"/>
    <property type="evidence" value="ECO:0000266"/>
    <property type="project" value="RGD"/>
</dbReference>
<dbReference type="GO" id="GO:0046872">
    <property type="term" value="F:metal ion binding"/>
    <property type="evidence" value="ECO:0007669"/>
    <property type="project" value="UniProtKB-KW"/>
</dbReference>
<dbReference type="GO" id="GO:0042803">
    <property type="term" value="F:protein homodimerization activity"/>
    <property type="evidence" value="ECO:0000266"/>
    <property type="project" value="RGD"/>
</dbReference>
<dbReference type="GO" id="GO:0004672">
    <property type="term" value="F:protein kinase activity"/>
    <property type="evidence" value="ECO:0000266"/>
    <property type="project" value="RGD"/>
</dbReference>
<dbReference type="GO" id="GO:0004674">
    <property type="term" value="F:protein serine/threonine kinase activity"/>
    <property type="evidence" value="ECO:0000266"/>
    <property type="project" value="RGD"/>
</dbReference>
<dbReference type="GO" id="GO:1990782">
    <property type="term" value="F:protein tyrosine kinase binding"/>
    <property type="evidence" value="ECO:0000266"/>
    <property type="project" value="RGD"/>
</dbReference>
<dbReference type="GO" id="GO:0046332">
    <property type="term" value="F:SMAD binding"/>
    <property type="evidence" value="ECO:0000266"/>
    <property type="project" value="RGD"/>
</dbReference>
<dbReference type="GO" id="GO:0050431">
    <property type="term" value="F:transforming growth factor beta binding"/>
    <property type="evidence" value="ECO:0000266"/>
    <property type="project" value="RGD"/>
</dbReference>
<dbReference type="GO" id="GO:0005025">
    <property type="term" value="F:transforming growth factor beta receptor activity, type I"/>
    <property type="evidence" value="ECO:0000266"/>
    <property type="project" value="RGD"/>
</dbReference>
<dbReference type="GO" id="GO:0004675">
    <property type="term" value="F:transmembrane receptor protein serine/threonine kinase activity"/>
    <property type="evidence" value="ECO:0000266"/>
    <property type="project" value="RGD"/>
</dbReference>
<dbReference type="GO" id="GO:0032924">
    <property type="term" value="P:activin receptor signaling pathway"/>
    <property type="evidence" value="ECO:0000266"/>
    <property type="project" value="RGD"/>
</dbReference>
<dbReference type="GO" id="GO:0002526">
    <property type="term" value="P:acute inflammatory response"/>
    <property type="evidence" value="ECO:0000266"/>
    <property type="project" value="RGD"/>
</dbReference>
<dbReference type="GO" id="GO:0003289">
    <property type="term" value="P:atrial septum primum morphogenesis"/>
    <property type="evidence" value="ECO:0000266"/>
    <property type="project" value="RGD"/>
</dbReference>
<dbReference type="GO" id="GO:0003181">
    <property type="term" value="P:atrioventricular valve morphogenesis"/>
    <property type="evidence" value="ECO:0000266"/>
    <property type="project" value="RGD"/>
</dbReference>
<dbReference type="GO" id="GO:0030509">
    <property type="term" value="P:BMP signaling pathway"/>
    <property type="evidence" value="ECO:0000266"/>
    <property type="project" value="RGD"/>
</dbReference>
<dbReference type="GO" id="GO:0001569">
    <property type="term" value="P:branching involved in blood vessel morphogenesis"/>
    <property type="evidence" value="ECO:0000266"/>
    <property type="project" value="RGD"/>
</dbReference>
<dbReference type="GO" id="GO:0060923">
    <property type="term" value="P:cardiac muscle cell fate commitment"/>
    <property type="evidence" value="ECO:0000266"/>
    <property type="project" value="RGD"/>
</dbReference>
<dbReference type="GO" id="GO:0030154">
    <property type="term" value="P:cell differentiation"/>
    <property type="evidence" value="ECO:0000318"/>
    <property type="project" value="GO_Central"/>
</dbReference>
<dbReference type="GO" id="GO:0071773">
    <property type="term" value="P:cellular response to BMP stimulus"/>
    <property type="evidence" value="ECO:0000266"/>
    <property type="project" value="RGD"/>
</dbReference>
<dbReference type="GO" id="GO:0071385">
    <property type="term" value="P:cellular response to glucocorticoid stimulus"/>
    <property type="evidence" value="ECO:0000270"/>
    <property type="project" value="RGD"/>
</dbReference>
<dbReference type="GO" id="GO:0071363">
    <property type="term" value="P:cellular response to growth factor stimulus"/>
    <property type="evidence" value="ECO:0000318"/>
    <property type="project" value="GO_Central"/>
</dbReference>
<dbReference type="GO" id="GO:0007368">
    <property type="term" value="P:determination of left/right symmetry"/>
    <property type="evidence" value="ECO:0000266"/>
    <property type="project" value="RGD"/>
</dbReference>
<dbReference type="GO" id="GO:0009953">
    <property type="term" value="P:dorsal/ventral pattern formation"/>
    <property type="evidence" value="ECO:0000318"/>
    <property type="project" value="GO_Central"/>
</dbReference>
<dbReference type="GO" id="GO:0003143">
    <property type="term" value="P:embryonic heart tube morphogenesis"/>
    <property type="evidence" value="ECO:0000266"/>
    <property type="project" value="RGD"/>
</dbReference>
<dbReference type="GO" id="GO:0061445">
    <property type="term" value="P:endocardial cushion cell fate commitment"/>
    <property type="evidence" value="ECO:0000266"/>
    <property type="project" value="RGD"/>
</dbReference>
<dbReference type="GO" id="GO:0003272">
    <property type="term" value="P:endocardial cushion formation"/>
    <property type="evidence" value="ECO:0000266"/>
    <property type="project" value="RGD"/>
</dbReference>
<dbReference type="GO" id="GO:0003274">
    <property type="term" value="P:endocardial cushion fusion"/>
    <property type="evidence" value="ECO:0000266"/>
    <property type="project" value="RGD"/>
</dbReference>
<dbReference type="GO" id="GO:0007369">
    <property type="term" value="P:gastrulation"/>
    <property type="evidence" value="ECO:0000266"/>
    <property type="project" value="RGD"/>
</dbReference>
<dbReference type="GO" id="GO:0001702">
    <property type="term" value="P:gastrulation with mouth forming second"/>
    <property type="evidence" value="ECO:0000266"/>
    <property type="project" value="RGD"/>
</dbReference>
<dbReference type="GO" id="GO:0007281">
    <property type="term" value="P:germ cell development"/>
    <property type="evidence" value="ECO:0000266"/>
    <property type="project" value="RGD"/>
</dbReference>
<dbReference type="GO" id="GO:0007507">
    <property type="term" value="P:heart development"/>
    <property type="evidence" value="ECO:0000266"/>
    <property type="project" value="RGD"/>
</dbReference>
<dbReference type="GO" id="GO:0001701">
    <property type="term" value="P:in utero embryonic development"/>
    <property type="evidence" value="ECO:0000266"/>
    <property type="project" value="RGD"/>
</dbReference>
<dbReference type="GO" id="GO:0007498">
    <property type="term" value="P:mesoderm development"/>
    <property type="evidence" value="ECO:0000266"/>
    <property type="project" value="RGD"/>
</dbReference>
<dbReference type="GO" id="GO:0001707">
    <property type="term" value="P:mesoderm formation"/>
    <property type="evidence" value="ECO:0000266"/>
    <property type="project" value="RGD"/>
</dbReference>
<dbReference type="GO" id="GO:0003183">
    <property type="term" value="P:mitral valve morphogenesis"/>
    <property type="evidence" value="ECO:0000266"/>
    <property type="project" value="RGD"/>
</dbReference>
<dbReference type="GO" id="GO:0032926">
    <property type="term" value="P:negative regulation of activin receptor signaling pathway"/>
    <property type="evidence" value="ECO:0000266"/>
    <property type="project" value="RGD"/>
</dbReference>
<dbReference type="GO" id="GO:2001237">
    <property type="term" value="P:negative regulation of extrinsic apoptotic signaling pathway"/>
    <property type="evidence" value="ECO:0000266"/>
    <property type="project" value="RGD"/>
</dbReference>
<dbReference type="GO" id="GO:2000134">
    <property type="term" value="P:negative regulation of G1/S transition of mitotic cell cycle"/>
    <property type="evidence" value="ECO:0000266"/>
    <property type="project" value="RGD"/>
</dbReference>
<dbReference type="GO" id="GO:0009968">
    <property type="term" value="P:negative regulation of signal transduction"/>
    <property type="evidence" value="ECO:0000266"/>
    <property type="project" value="RGD"/>
</dbReference>
<dbReference type="GO" id="GO:0001755">
    <property type="term" value="P:neural crest cell migration"/>
    <property type="evidence" value="ECO:0000266"/>
    <property type="project" value="RGD"/>
</dbReference>
<dbReference type="GO" id="GO:0001649">
    <property type="term" value="P:osteoblast differentiation"/>
    <property type="evidence" value="ECO:0000266"/>
    <property type="project" value="RGD"/>
</dbReference>
<dbReference type="GO" id="GO:0060037">
    <property type="term" value="P:pharyngeal system development"/>
    <property type="evidence" value="ECO:0000266"/>
    <property type="project" value="RGD"/>
</dbReference>
<dbReference type="GO" id="GO:0030501">
    <property type="term" value="P:positive regulation of bone mineralization"/>
    <property type="evidence" value="ECO:0000266"/>
    <property type="project" value="RGD"/>
</dbReference>
<dbReference type="GO" id="GO:0062043">
    <property type="term" value="P:positive regulation of cardiac epithelial to mesenchymal transition"/>
    <property type="evidence" value="ECO:0000266"/>
    <property type="project" value="RGD"/>
</dbReference>
<dbReference type="GO" id="GO:0030335">
    <property type="term" value="P:positive regulation of cell migration"/>
    <property type="evidence" value="ECO:0000266"/>
    <property type="project" value="RGD"/>
</dbReference>
<dbReference type="GO" id="GO:2000017">
    <property type="term" value="P:positive regulation of determination of dorsal identity"/>
    <property type="evidence" value="ECO:0000266"/>
    <property type="project" value="RGD"/>
</dbReference>
<dbReference type="GO" id="GO:0045893">
    <property type="term" value="P:positive regulation of DNA-templated transcription"/>
    <property type="evidence" value="ECO:0000266"/>
    <property type="project" value="RGD"/>
</dbReference>
<dbReference type="GO" id="GO:1902533">
    <property type="term" value="P:positive regulation of intracellular signal transduction"/>
    <property type="evidence" value="ECO:0000266"/>
    <property type="project" value="RGD"/>
</dbReference>
<dbReference type="GO" id="GO:0045669">
    <property type="term" value="P:positive regulation of osteoblast differentiation"/>
    <property type="evidence" value="ECO:0000266"/>
    <property type="project" value="RGD"/>
</dbReference>
<dbReference type="GO" id="GO:0060391">
    <property type="term" value="P:positive regulation of SMAD protein signal transduction"/>
    <property type="evidence" value="ECO:0000266"/>
    <property type="project" value="RGD"/>
</dbReference>
<dbReference type="GO" id="GO:0045944">
    <property type="term" value="P:positive regulation of transcription by RNA polymerase II"/>
    <property type="evidence" value="ECO:0000266"/>
    <property type="project" value="RGD"/>
</dbReference>
<dbReference type="GO" id="GO:0030278">
    <property type="term" value="P:regulation of ossification"/>
    <property type="evidence" value="ECO:0000266"/>
    <property type="project" value="RGD"/>
</dbReference>
<dbReference type="GO" id="GO:0048641">
    <property type="term" value="P:regulation of skeletal muscle tissue development"/>
    <property type="evidence" value="ECO:0000270"/>
    <property type="project" value="UniProtKB"/>
</dbReference>
<dbReference type="GO" id="GO:0051145">
    <property type="term" value="P:smooth muscle cell differentiation"/>
    <property type="evidence" value="ECO:0000266"/>
    <property type="project" value="RGD"/>
</dbReference>
<dbReference type="GO" id="GO:0007179">
    <property type="term" value="P:transforming growth factor beta receptor signaling pathway"/>
    <property type="evidence" value="ECO:0000315"/>
    <property type="project" value="UniProtKB"/>
</dbReference>
<dbReference type="GO" id="GO:0001655">
    <property type="term" value="P:urogenital system development"/>
    <property type="evidence" value="ECO:0000315"/>
    <property type="project" value="MGI"/>
</dbReference>
<dbReference type="GO" id="GO:0060412">
    <property type="term" value="P:ventricular septum morphogenesis"/>
    <property type="evidence" value="ECO:0000266"/>
    <property type="project" value="RGD"/>
</dbReference>
<dbReference type="CDD" id="cd14142">
    <property type="entry name" value="STKc_ACVR1_ALK1"/>
    <property type="match status" value="1"/>
</dbReference>
<dbReference type="CDD" id="cd23535">
    <property type="entry name" value="TFP_LU_ECD_ALK2"/>
    <property type="match status" value="1"/>
</dbReference>
<dbReference type="FunFam" id="1.10.510.10:FF:000018">
    <property type="entry name" value="Receptor protein serine/threonine kinase"/>
    <property type="match status" value="1"/>
</dbReference>
<dbReference type="FunFam" id="3.30.200.20:FF:000064">
    <property type="entry name" value="Receptor protein serine/threonine kinase"/>
    <property type="match status" value="1"/>
</dbReference>
<dbReference type="FunFam" id="2.10.60.10:FF:000008">
    <property type="entry name" value="Serine/threonine-protein kinase receptor"/>
    <property type="match status" value="1"/>
</dbReference>
<dbReference type="Gene3D" id="2.10.60.10">
    <property type="entry name" value="CD59"/>
    <property type="match status" value="1"/>
</dbReference>
<dbReference type="Gene3D" id="3.30.200.20">
    <property type="entry name" value="Phosphorylase Kinase, domain 1"/>
    <property type="match status" value="1"/>
</dbReference>
<dbReference type="Gene3D" id="1.10.510.10">
    <property type="entry name" value="Transferase(Phosphotransferase) domain 1"/>
    <property type="match status" value="1"/>
</dbReference>
<dbReference type="InterPro" id="IPR000472">
    <property type="entry name" value="Activin_recp"/>
</dbReference>
<dbReference type="InterPro" id="IPR003605">
    <property type="entry name" value="GS_dom"/>
</dbReference>
<dbReference type="InterPro" id="IPR011009">
    <property type="entry name" value="Kinase-like_dom_sf"/>
</dbReference>
<dbReference type="InterPro" id="IPR000719">
    <property type="entry name" value="Prot_kinase_dom"/>
</dbReference>
<dbReference type="InterPro" id="IPR017441">
    <property type="entry name" value="Protein_kinase_ATP_BS"/>
</dbReference>
<dbReference type="InterPro" id="IPR001245">
    <property type="entry name" value="Ser-Thr/Tyr_kinase_cat_dom"/>
</dbReference>
<dbReference type="InterPro" id="IPR008271">
    <property type="entry name" value="Ser/Thr_kinase_AS"/>
</dbReference>
<dbReference type="InterPro" id="IPR045860">
    <property type="entry name" value="Snake_toxin-like_sf"/>
</dbReference>
<dbReference type="InterPro" id="IPR000333">
    <property type="entry name" value="TGFB_receptor"/>
</dbReference>
<dbReference type="PANTHER" id="PTHR23255:SF69">
    <property type="entry name" value="ACTIVIN RECEPTOR TYPE-1"/>
    <property type="match status" value="1"/>
</dbReference>
<dbReference type="PANTHER" id="PTHR23255">
    <property type="entry name" value="TRANSFORMING GROWTH FACTOR-BETA RECEPTOR TYPE I AND II"/>
    <property type="match status" value="1"/>
</dbReference>
<dbReference type="Pfam" id="PF01064">
    <property type="entry name" value="Activin_recp"/>
    <property type="match status" value="1"/>
</dbReference>
<dbReference type="Pfam" id="PF07714">
    <property type="entry name" value="PK_Tyr_Ser-Thr"/>
    <property type="match status" value="1"/>
</dbReference>
<dbReference type="Pfam" id="PF08515">
    <property type="entry name" value="TGF_beta_GS"/>
    <property type="match status" value="1"/>
</dbReference>
<dbReference type="PRINTS" id="PR00653">
    <property type="entry name" value="ACTIVIN2R"/>
</dbReference>
<dbReference type="SMART" id="SM00467">
    <property type="entry name" value="GS"/>
    <property type="match status" value="1"/>
</dbReference>
<dbReference type="SMART" id="SM00220">
    <property type="entry name" value="S_TKc"/>
    <property type="match status" value="1"/>
</dbReference>
<dbReference type="SUPFAM" id="SSF56112">
    <property type="entry name" value="Protein kinase-like (PK-like)"/>
    <property type="match status" value="1"/>
</dbReference>
<dbReference type="SUPFAM" id="SSF57302">
    <property type="entry name" value="Snake toxin-like"/>
    <property type="match status" value="1"/>
</dbReference>
<dbReference type="PROSITE" id="PS51256">
    <property type="entry name" value="GS"/>
    <property type="match status" value="1"/>
</dbReference>
<dbReference type="PROSITE" id="PS00107">
    <property type="entry name" value="PROTEIN_KINASE_ATP"/>
    <property type="match status" value="1"/>
</dbReference>
<dbReference type="PROSITE" id="PS50011">
    <property type="entry name" value="PROTEIN_KINASE_DOM"/>
    <property type="match status" value="1"/>
</dbReference>
<dbReference type="PROSITE" id="PS00108">
    <property type="entry name" value="PROTEIN_KINASE_ST"/>
    <property type="match status" value="1"/>
</dbReference>
<sequence length="509" mass="57195">MVDGAMILSVLMMMALPSPSMEDEEPKVNPKLYMCVCEGLSCGNEDHCEGQQCFSSLSVNDGFRVYQKGCFQVYEQGKMTCKTPPSPGQAVECCQGDWCNRNVTARLPTKGKSFPGSQNFHLEVGLIILSVVFAVCLFACILGVALRKFKRRNQERLNPRDVEYGTIEGLITTNVGDSTLAELLDHSCTSGSGSGLPFLVQRTVARQITLLECVGKGRYGEVWRGSWQGENVAVKIFSSRDEKSWFRETELYNTVMLRHENILGFIASDMTSRHSSTQLWLITHYHEMGSLYDYLQLTTLDTVSCLRIVLSIASGLAHLHIEIFGTQGKSAIAHRDLKSKNILVKKNGQCCIADLGLAVMHSQSTNQLDVGNNPRVGTKRYMAPEVLDETIQVDCFDSYKRVDIWAFGLVLWEVARRMVSNGIVEDYKPPFYDVVPNDPSFEDMRKVVCVDQQRPNIPNRWFSDPTLTSLAKLMKECWYQNPSARLTALRIKKTLTKIDNSLDKLKTDC</sequence>
<comment type="function">
    <text evidence="2 3 4">Bone morphogenetic protein (BMP) type I receptor that is involved in a wide variety of biological processes, including bone, heart, cartilage, nervous, and reproductive system development and regulation. As a type I receptor, forms heterotetrameric receptor complexes with the type II receptors AMHR2, ACVR2A ors ACVR2B. Upon binding of ligands such as BMP7 or GDF2/BMP9 to the heteromeric complexes, type II receptors transphosphorylate ACVR1 intracellular domain. In turn, ACVR1 kinase domain is activated and subsequently phosphorylates SMAD1/5/8 proteins that transduce the signal. In addition to its role in mediating BMP pathway-specific signaling, suppresses TGFbeta/activin pathway signaling by interfering with the binding of activin to its type II receptor (By similarity). Besides canonical SMAD signaling, can activate non-canonical pathways such as p38 mitogen-activated protein kinases/MAPKs (By similarity). May promote the expression of HAMP, potentially via its interaction with BMP6 (By similarity).</text>
</comment>
<comment type="catalytic activity">
    <reaction>
        <text>L-threonyl-[receptor-protein] + ATP = O-phospho-L-threonyl-[receptor-protein] + ADP + H(+)</text>
        <dbReference type="Rhea" id="RHEA:44880"/>
        <dbReference type="Rhea" id="RHEA-COMP:11024"/>
        <dbReference type="Rhea" id="RHEA-COMP:11025"/>
        <dbReference type="ChEBI" id="CHEBI:15378"/>
        <dbReference type="ChEBI" id="CHEBI:30013"/>
        <dbReference type="ChEBI" id="CHEBI:30616"/>
        <dbReference type="ChEBI" id="CHEBI:61977"/>
        <dbReference type="ChEBI" id="CHEBI:456216"/>
        <dbReference type="EC" id="2.7.11.30"/>
    </reaction>
</comment>
<comment type="catalytic activity">
    <reaction>
        <text>L-seryl-[receptor-protein] + ATP = O-phospho-L-seryl-[receptor-protein] + ADP + H(+)</text>
        <dbReference type="Rhea" id="RHEA:18673"/>
        <dbReference type="Rhea" id="RHEA-COMP:11022"/>
        <dbReference type="Rhea" id="RHEA-COMP:11023"/>
        <dbReference type="ChEBI" id="CHEBI:15378"/>
        <dbReference type="ChEBI" id="CHEBI:29999"/>
        <dbReference type="ChEBI" id="CHEBI:30616"/>
        <dbReference type="ChEBI" id="CHEBI:83421"/>
        <dbReference type="ChEBI" id="CHEBI:456216"/>
        <dbReference type="EC" id="2.7.11.30"/>
    </reaction>
</comment>
<comment type="cofactor">
    <cofactor evidence="1">
        <name>Mg(2+)</name>
        <dbReference type="ChEBI" id="CHEBI:18420"/>
    </cofactor>
    <cofactor evidence="1">
        <name>Mn(2+)</name>
        <dbReference type="ChEBI" id="CHEBI:29035"/>
    </cofactor>
</comment>
<comment type="subunit">
    <text evidence="3 4">Interacts with FKBP1A (By similarity). Interacts with FCHO1 (By similarity). Interacts with CLU. Interacts with type II receptors AMHR2 and ACVR2A (By similarity). Interacts with BMP7 (By similarity). Interacts with GDF2/BMP9 (By similarity). Interacts with BMP6 (when glycosylated); the interaction may induce HAMP expression (By similarity). Interacts with TSC22D1/TSC-22 (By similarity).</text>
</comment>
<comment type="subcellular location">
    <subcellularLocation>
        <location>Membrane</location>
        <topology>Single-pass type I membrane protein</topology>
    </subcellularLocation>
</comment>
<comment type="tissue specificity">
    <text>Urogenital ridge, testis, ovary, brain and lungs.</text>
</comment>
<comment type="similarity">
    <text evidence="9">Belongs to the protein kinase superfamily. TKL Ser/Thr protein kinase family. TGFB receptor subfamily.</text>
</comment>
<proteinExistence type="evidence at transcript level"/>
<organism>
    <name type="scientific">Rattus norvegicus</name>
    <name type="common">Rat</name>
    <dbReference type="NCBI Taxonomy" id="10116"/>
    <lineage>
        <taxon>Eukaryota</taxon>
        <taxon>Metazoa</taxon>
        <taxon>Chordata</taxon>
        <taxon>Craniata</taxon>
        <taxon>Vertebrata</taxon>
        <taxon>Euteleostomi</taxon>
        <taxon>Mammalia</taxon>
        <taxon>Eutheria</taxon>
        <taxon>Euarchontoglires</taxon>
        <taxon>Glires</taxon>
        <taxon>Rodentia</taxon>
        <taxon>Myomorpha</taxon>
        <taxon>Muroidea</taxon>
        <taxon>Muridae</taxon>
        <taxon>Murinae</taxon>
        <taxon>Rattus</taxon>
    </lineage>
</organism>
<evidence type="ECO:0000250" key="1"/>
<evidence type="ECO:0000250" key="2">
    <source>
        <dbReference type="UniProtKB" id="P15261"/>
    </source>
</evidence>
<evidence type="ECO:0000250" key="3">
    <source>
        <dbReference type="UniProtKB" id="P37172"/>
    </source>
</evidence>
<evidence type="ECO:0000250" key="4">
    <source>
        <dbReference type="UniProtKB" id="Q04771"/>
    </source>
</evidence>
<evidence type="ECO:0000255" key="5"/>
<evidence type="ECO:0000255" key="6">
    <source>
        <dbReference type="PROSITE-ProRule" id="PRU00159"/>
    </source>
</evidence>
<evidence type="ECO:0000255" key="7">
    <source>
        <dbReference type="PROSITE-ProRule" id="PRU00585"/>
    </source>
</evidence>
<evidence type="ECO:0000255" key="8">
    <source>
        <dbReference type="PROSITE-ProRule" id="PRU10027"/>
    </source>
</evidence>
<evidence type="ECO:0000305" key="9"/>
<reference key="1">
    <citation type="journal article" date="1993" name="Dev. Dyn.">
        <title>Developmental expression of four novel serine/threonine kinase receptors homologous to the activin/transforming growth factor-beta type II receptor family.</title>
        <authorList>
            <person name="He W.-W."/>
            <person name="Gustafson M.L."/>
            <person name="Hirobe S."/>
            <person name="Donahoe P.K."/>
        </authorList>
    </citation>
    <scope>NUCLEOTIDE SEQUENCE [MRNA]</scope>
    <source>
        <strain>Sprague-Dawley</strain>
        <tissue>Urogenital ridge</tissue>
    </source>
</reference>
<reference key="2">
    <citation type="journal article" date="1993" name="Proc. Natl. Acad. Sci. U.S.A.">
        <title>Cloning and characterization of a transmembrane serine kinase that acts as an activin type I receptor.</title>
        <authorList>
            <person name="Tsuchida K.K.T."/>
            <person name="Vale W.W."/>
        </authorList>
    </citation>
    <scope>NUCLEOTIDE SEQUENCE [MRNA]</scope>
    <source>
        <strain>Sprague-Dawley</strain>
    </source>
</reference>
<gene>
    <name type="primary">Acvr1</name>
    <name type="synonym">Acvrlk2</name>
</gene>